<sequence length="488" mass="54991">MAGTLCVTLLLLLSTIAVGGRKTWRRRSQQIVPSSWERSEGGGESFPLDFTAVEGNMDNFMNQIKSLAQSLYPCSAQRLDDEMKLHSLHNKSVTCNDGSPAGYYLKESKGSRRWLVFLEGGWYCISRENCDIRYDTMRSLMSSRAWPPSKTASGILSTQPEENPHWWNANIVFIPYCSSDVWSGVSPKTEKSGYAFMGSLIIQEVVKELLGKGLDTAKLLLLAGSSAGGTGVLLNVDMVANLLEELGYPGIEVRGLSDSGWFLNNKQYWRTDCTDIITCAPTEAIQRGIRYWNSMVPERCKQQFKEGEEWNCFFGYKIYPTLRSPVFVVQWLFDEAQLTVDNVHLSRQPVQESQWLYIQNLGRELRNTLKDVGASFAPACLAHEVITRSHWTEIQVRGTSLPRALHCWDRSLQEPNKNSKVQLKGCPFHLMDSCPWPQCNPTCPSIRDHFTGQEMSVVQFLMHLGFDVQKMASQQGMEPGKLLGVLSS</sequence>
<evidence type="ECO:0000250" key="1">
    <source>
        <dbReference type="UniProtKB" id="Q6P988"/>
    </source>
</evidence>
<evidence type="ECO:0000250" key="2">
    <source>
        <dbReference type="UniProtKB" id="Q9VUX3"/>
    </source>
</evidence>
<evidence type="ECO:0000255" key="3"/>
<evidence type="ECO:0000255" key="4">
    <source>
        <dbReference type="PROSITE-ProRule" id="PRU00498"/>
    </source>
</evidence>
<evidence type="ECO:0000269" key="5">
    <source>
    </source>
</evidence>
<evidence type="ECO:0000303" key="6">
    <source>
    </source>
</evidence>
<evidence type="ECO:0000305" key="7"/>
<evidence type="ECO:0000305" key="8">
    <source>
    </source>
</evidence>
<evidence type="ECO:0000312" key="9">
    <source>
        <dbReference type="EMBL" id="AJQ30102.1"/>
    </source>
</evidence>
<reference key="1">
    <citation type="journal article" date="2015" name="Dev. Cell">
        <title>Notum is required for neural and head induction via Wnt deacylation, oxidation, and inactivation.</title>
        <authorList>
            <person name="Zhang X."/>
            <person name="Cheong S.M."/>
            <person name="Amado N.G."/>
            <person name="Reis A.H."/>
            <person name="MacDonald B.T."/>
            <person name="Zebisch M."/>
            <person name="Jones E.Y."/>
            <person name="Abreu J.G."/>
            <person name="He X."/>
        </authorList>
    </citation>
    <scope>NUCLEOTIDE SEQUENCE [MRNA]</scope>
    <scope>FUNCTION</scope>
    <scope>TISSUE SPECIFICITY</scope>
    <scope>DEVELOPMENTAL STAGE</scope>
</reference>
<feature type="signal peptide" evidence="3">
    <location>
        <begin position="1"/>
        <end position="19"/>
    </location>
</feature>
<feature type="chain" id="PRO_0000433428" description="Palmitoleoyl-protein carboxylesterase notum1'" evidence="3">
    <location>
        <begin position="20"/>
        <end position="488"/>
    </location>
</feature>
<feature type="active site" description="Charge relay system" evidence="1">
    <location>
        <position position="226"/>
    </location>
</feature>
<feature type="active site" description="Charge relay system" evidence="1">
    <location>
        <position position="334"/>
    </location>
</feature>
<feature type="active site" description="Charge relay system" evidence="1">
    <location>
        <position position="383"/>
    </location>
</feature>
<feature type="glycosylation site" description="N-linked (GlcNAc...) asparagine" evidence="4">
    <location>
        <position position="90"/>
    </location>
</feature>
<keyword id="KW-0325">Glycoprotein</keyword>
<keyword id="KW-0378">Hydrolase</keyword>
<keyword id="KW-1185">Reference proteome</keyword>
<keyword id="KW-0964">Secreted</keyword>
<keyword id="KW-0719">Serine esterase</keyword>
<keyword id="KW-0732">Signal</keyword>
<keyword id="KW-0879">Wnt signaling pathway</keyword>
<name>NOT1P_XENLA</name>
<protein>
    <recommendedName>
        <fullName evidence="1">Palmitoleoyl-protein carboxylesterase notum1'</fullName>
        <ecNumber evidence="1">3.1.1.98</ecNumber>
    </recommendedName>
</protein>
<comment type="function">
    <text evidence="8">Carboxylesterase that acts as a key negative regulator of the Wnt signaling pathway by specifically mediating depalmitoleoylation of WNT proteins. Serine palmitoleoylation of WNT proteins is required for efficient binding to frizzled receptors. Functions in the prospective ectoderm and is required for neural induction.</text>
</comment>
<comment type="catalytic activity">
    <reaction evidence="1">
        <text>[Wnt protein]-O-(9Z)-hexadecenoyl-L-serine + H2O = [Wnt protein]-L-serine + (9Z)-hexadecenoate + H(+)</text>
        <dbReference type="Rhea" id="RHEA:45340"/>
        <dbReference type="Rhea" id="RHEA-COMP:11170"/>
        <dbReference type="Rhea" id="RHEA-COMP:11171"/>
        <dbReference type="ChEBI" id="CHEBI:15377"/>
        <dbReference type="ChEBI" id="CHEBI:15378"/>
        <dbReference type="ChEBI" id="CHEBI:29999"/>
        <dbReference type="ChEBI" id="CHEBI:32372"/>
        <dbReference type="ChEBI" id="CHEBI:85189"/>
        <dbReference type="EC" id="3.1.1.98"/>
    </reaction>
</comment>
<comment type="subcellular location">
    <subcellularLocation>
        <location evidence="2">Secreted</location>
    </subcellularLocation>
</comment>
<comment type="tissue specificity">
    <text evidence="5">Expressed in the egg and through cleavage to gastrulation stages. Enriched in the animal (prospective ectoderm) and dorsal regions in early gastrula. Shows a dynamic expression during embryogenesis, in particular during neural induction and antero-posterior (AP) patterning.</text>
</comment>
<comment type="developmental stage">
    <text evidence="5">Present in animal blastomeres at 4-cell and stage 6.5. At stages 8.5 and 9.5 (blastula), detected broadly in the animal region. At stage 10 (early gastrula), remains broadly expressed animally, but also detected in the dorsal marginal zone (the Organizer), with lower expression in the ventral marginal zone. At stage 11, found in the forming neural plate in a noticeable antero-posterior (AP) gradient (anterior high and posterior low), with additional weaker expression in the head mesoderm. Remains detectable, but becomes faint in the neural plate at stage 13. By stage 15, detected at the anterior border of the neural plate and in ventro-lateral epidermis excluding the neural plate. Later, it is detected in the cement gland (an anterior organ) at tail bud stages (stage 25), in branchial arches, the otic vesicle, and developing pronephros, with diffused expression in the head (stage 35).</text>
</comment>
<comment type="similarity">
    <text evidence="7">Belongs to the pectinacetylesterase family. Notum subfamily.</text>
</comment>
<organism evidence="9">
    <name type="scientific">Xenopus laevis</name>
    <name type="common">African clawed frog</name>
    <dbReference type="NCBI Taxonomy" id="8355"/>
    <lineage>
        <taxon>Eukaryota</taxon>
        <taxon>Metazoa</taxon>
        <taxon>Chordata</taxon>
        <taxon>Craniata</taxon>
        <taxon>Vertebrata</taxon>
        <taxon>Euteleostomi</taxon>
        <taxon>Amphibia</taxon>
        <taxon>Batrachia</taxon>
        <taxon>Anura</taxon>
        <taxon>Pipoidea</taxon>
        <taxon>Pipidae</taxon>
        <taxon>Xenopodinae</taxon>
        <taxon>Xenopus</taxon>
        <taxon>Xenopus</taxon>
    </lineage>
</organism>
<accession>A0A0D3QS98</accession>
<gene>
    <name evidence="6" type="primary">notum1'</name>
</gene>
<proteinExistence type="evidence at transcript level"/>
<dbReference type="EC" id="3.1.1.98" evidence="1"/>
<dbReference type="EMBL" id="KP781856">
    <property type="protein sequence ID" value="AJQ30102.1"/>
    <property type="molecule type" value="mRNA"/>
</dbReference>
<dbReference type="SMR" id="A0A0D3QS98"/>
<dbReference type="GlyCosmos" id="A0A0D3QS98">
    <property type="glycosylation" value="1 site, No reported glycans"/>
</dbReference>
<dbReference type="GeneID" id="108702711"/>
<dbReference type="KEGG" id="xla:108702711"/>
<dbReference type="AGR" id="Xenbase:XB-GENE-17335322"/>
<dbReference type="CTD" id="108702711"/>
<dbReference type="Xenbase" id="XB-GENE-17335322">
    <property type="gene designation" value="notum.S"/>
</dbReference>
<dbReference type="OMA" id="DCPSPTC"/>
<dbReference type="OrthoDB" id="2015280at2759"/>
<dbReference type="Proteomes" id="UP000186698">
    <property type="component" value="Chromosome 9_10S"/>
</dbReference>
<dbReference type="GO" id="GO:0005576">
    <property type="term" value="C:extracellular region"/>
    <property type="evidence" value="ECO:0007669"/>
    <property type="project" value="UniProtKB-SubCell"/>
</dbReference>
<dbReference type="GO" id="GO:1990699">
    <property type="term" value="F:palmitoleyl hydrolase activity"/>
    <property type="evidence" value="ECO:0000318"/>
    <property type="project" value="GO_Central"/>
</dbReference>
<dbReference type="GO" id="GO:0140776">
    <property type="term" value="F:protein-containing complex destabilizing activity"/>
    <property type="evidence" value="ECO:0000314"/>
    <property type="project" value="UniProtKB"/>
</dbReference>
<dbReference type="GO" id="GO:0090090">
    <property type="term" value="P:negative regulation of canonical Wnt signaling pathway"/>
    <property type="evidence" value="ECO:0000318"/>
    <property type="project" value="GO_Central"/>
</dbReference>
<dbReference type="GO" id="GO:0030178">
    <property type="term" value="P:negative regulation of Wnt signaling pathway"/>
    <property type="evidence" value="ECO:0000314"/>
    <property type="project" value="UniProtKB"/>
</dbReference>
<dbReference type="GO" id="GO:0016055">
    <property type="term" value="P:Wnt signaling pathway"/>
    <property type="evidence" value="ECO:0007669"/>
    <property type="project" value="UniProtKB-KW"/>
</dbReference>
<dbReference type="InterPro" id="IPR004963">
    <property type="entry name" value="PAE/NOTUM"/>
</dbReference>
<dbReference type="PANTHER" id="PTHR21562">
    <property type="entry name" value="NOTUM-RELATED"/>
    <property type="match status" value="1"/>
</dbReference>
<dbReference type="PANTHER" id="PTHR21562:SF7">
    <property type="entry name" value="PALMITOLEOYL-PROTEIN CARBOXYLESTERASE NOTUM"/>
    <property type="match status" value="1"/>
</dbReference>
<dbReference type="Pfam" id="PF03283">
    <property type="entry name" value="PAE"/>
    <property type="match status" value="1"/>
</dbReference>